<name>ATPB_DESPS</name>
<protein>
    <recommendedName>
        <fullName evidence="1">ATP synthase subunit beta</fullName>
        <ecNumber evidence="1">7.1.2.2</ecNumber>
    </recommendedName>
    <alternativeName>
        <fullName evidence="1">ATP synthase F1 sector subunit beta</fullName>
    </alternativeName>
    <alternativeName>
        <fullName evidence="1">F-ATPase subunit beta</fullName>
    </alternativeName>
</protein>
<keyword id="KW-0066">ATP synthesis</keyword>
<keyword id="KW-0067">ATP-binding</keyword>
<keyword id="KW-0997">Cell inner membrane</keyword>
<keyword id="KW-1003">Cell membrane</keyword>
<keyword id="KW-0139">CF(1)</keyword>
<keyword id="KW-0375">Hydrogen ion transport</keyword>
<keyword id="KW-0406">Ion transport</keyword>
<keyword id="KW-0472">Membrane</keyword>
<keyword id="KW-0547">Nucleotide-binding</keyword>
<keyword id="KW-1185">Reference proteome</keyword>
<keyword id="KW-1278">Translocase</keyword>
<keyword id="KW-0813">Transport</keyword>
<organism>
    <name type="scientific">Desulfotalea psychrophila (strain LSv54 / DSM 12343)</name>
    <dbReference type="NCBI Taxonomy" id="177439"/>
    <lineage>
        <taxon>Bacteria</taxon>
        <taxon>Pseudomonadati</taxon>
        <taxon>Thermodesulfobacteriota</taxon>
        <taxon>Desulfobulbia</taxon>
        <taxon>Desulfobulbales</taxon>
        <taxon>Desulfocapsaceae</taxon>
        <taxon>Desulfotalea</taxon>
    </lineage>
</organism>
<accession>Q6AQ10</accession>
<comment type="function">
    <text evidence="1">Produces ATP from ADP in the presence of a proton gradient across the membrane. The catalytic sites are hosted primarily by the beta subunits.</text>
</comment>
<comment type="catalytic activity">
    <reaction evidence="1">
        <text>ATP + H2O + 4 H(+)(in) = ADP + phosphate + 5 H(+)(out)</text>
        <dbReference type="Rhea" id="RHEA:57720"/>
        <dbReference type="ChEBI" id="CHEBI:15377"/>
        <dbReference type="ChEBI" id="CHEBI:15378"/>
        <dbReference type="ChEBI" id="CHEBI:30616"/>
        <dbReference type="ChEBI" id="CHEBI:43474"/>
        <dbReference type="ChEBI" id="CHEBI:456216"/>
        <dbReference type="EC" id="7.1.2.2"/>
    </reaction>
</comment>
<comment type="subunit">
    <text evidence="1">F-type ATPases have 2 components, CF(1) - the catalytic core - and CF(0) - the membrane proton channel. CF(1) has five subunits: alpha(3), beta(3), gamma(1), delta(1), epsilon(1). CF(0) has three main subunits: a(1), b(2) and c(9-12). The alpha and beta chains form an alternating ring which encloses part of the gamma chain. CF(1) is attached to CF(0) by a central stalk formed by the gamma and epsilon chains, while a peripheral stalk is formed by the delta and b chains.</text>
</comment>
<comment type="subcellular location">
    <subcellularLocation>
        <location evidence="1">Cell inner membrane</location>
        <topology evidence="1">Peripheral membrane protein</topology>
    </subcellularLocation>
</comment>
<comment type="similarity">
    <text evidence="1">Belongs to the ATPase alpha/beta chains family.</text>
</comment>
<feature type="chain" id="PRO_0000254252" description="ATP synthase subunit beta">
    <location>
        <begin position="1"/>
        <end position="471"/>
    </location>
</feature>
<feature type="binding site" evidence="1">
    <location>
        <begin position="158"/>
        <end position="165"/>
    </location>
    <ligand>
        <name>ATP</name>
        <dbReference type="ChEBI" id="CHEBI:30616"/>
    </ligand>
</feature>
<gene>
    <name evidence="1" type="primary">atpD</name>
    <name type="ordered locus">DP0834</name>
</gene>
<reference key="1">
    <citation type="journal article" date="2004" name="Environ. Microbiol.">
        <title>The genome of Desulfotalea psychrophila, a sulfate-reducing bacterium from permanently cold Arctic sediments.</title>
        <authorList>
            <person name="Rabus R."/>
            <person name="Ruepp A."/>
            <person name="Frickey T."/>
            <person name="Rattei T."/>
            <person name="Fartmann B."/>
            <person name="Stark M."/>
            <person name="Bauer M."/>
            <person name="Zibat A."/>
            <person name="Lombardot T."/>
            <person name="Becker I."/>
            <person name="Amann J."/>
            <person name="Gellner K."/>
            <person name="Teeling H."/>
            <person name="Leuschner W.D."/>
            <person name="Gloeckner F.-O."/>
            <person name="Lupas A.N."/>
            <person name="Amann R."/>
            <person name="Klenk H.-P."/>
        </authorList>
    </citation>
    <scope>NUCLEOTIDE SEQUENCE [LARGE SCALE GENOMIC DNA]</scope>
    <source>
        <strain>DSM 12343 / LSv54</strain>
    </source>
</reference>
<evidence type="ECO:0000255" key="1">
    <source>
        <dbReference type="HAMAP-Rule" id="MF_01347"/>
    </source>
</evidence>
<sequence length="471" mass="50601">MSEQKIGKITQVIGPVVDVEFEPGQLPNILNACTVTNPGINDVPDNLVIEIAQHLGDNVCRCIAMDQTDGLVRGMVVRDTGLPITIPVGEGALGRIMNVVGRPVDGLGPIPAKTSMSIHRDAPLFTEQDTEVRVLETGIKVIDLLVPFPLGGKMGLFGGAGCGKTVIMMEMVNNIAMHHGGISVFCGVGERTREGNDLYNEMKESGVLPKAALVYGQMTEPPGARARVALTGLTAAEYFRDEEGQDVLFFVDNIFRFTQAGSEVSALLGRIPSAVGYQPTLATDLGALQERITSTNKGSITAVQCVYVPADDLTDPAPATTFAHLDGTVVLSRQISELGIYPAVDPLDSTSRILDPNVIGEEHYDVARGVQVSLQKYKDLQDIIAILGMDELSEEDQQLVSRARKIQRYLSQPFTVAEVFTGMPGKFVKVADTVQGFKEILEGKHDALNENSFYMVGSIDEAVAKDAASKA</sequence>
<dbReference type="EC" id="7.1.2.2" evidence="1"/>
<dbReference type="EMBL" id="CR522870">
    <property type="protein sequence ID" value="CAG35563.1"/>
    <property type="molecule type" value="Genomic_DNA"/>
</dbReference>
<dbReference type="RefSeq" id="WP_011188079.1">
    <property type="nucleotide sequence ID" value="NC_006138.1"/>
</dbReference>
<dbReference type="SMR" id="Q6AQ10"/>
<dbReference type="STRING" id="177439.DP0834"/>
<dbReference type="KEGG" id="dps:DP0834"/>
<dbReference type="eggNOG" id="COG0055">
    <property type="taxonomic scope" value="Bacteria"/>
</dbReference>
<dbReference type="HOGENOM" id="CLU_022398_0_2_7"/>
<dbReference type="OrthoDB" id="9801639at2"/>
<dbReference type="Proteomes" id="UP000000602">
    <property type="component" value="Chromosome"/>
</dbReference>
<dbReference type="GO" id="GO:0005886">
    <property type="term" value="C:plasma membrane"/>
    <property type="evidence" value="ECO:0007669"/>
    <property type="project" value="UniProtKB-SubCell"/>
</dbReference>
<dbReference type="GO" id="GO:0045259">
    <property type="term" value="C:proton-transporting ATP synthase complex"/>
    <property type="evidence" value="ECO:0007669"/>
    <property type="project" value="UniProtKB-KW"/>
</dbReference>
<dbReference type="GO" id="GO:0005524">
    <property type="term" value="F:ATP binding"/>
    <property type="evidence" value="ECO:0007669"/>
    <property type="project" value="UniProtKB-UniRule"/>
</dbReference>
<dbReference type="GO" id="GO:0016887">
    <property type="term" value="F:ATP hydrolysis activity"/>
    <property type="evidence" value="ECO:0007669"/>
    <property type="project" value="InterPro"/>
</dbReference>
<dbReference type="GO" id="GO:0046933">
    <property type="term" value="F:proton-transporting ATP synthase activity, rotational mechanism"/>
    <property type="evidence" value="ECO:0007669"/>
    <property type="project" value="UniProtKB-UniRule"/>
</dbReference>
<dbReference type="CDD" id="cd18110">
    <property type="entry name" value="ATP-synt_F1_beta_C"/>
    <property type="match status" value="1"/>
</dbReference>
<dbReference type="CDD" id="cd18115">
    <property type="entry name" value="ATP-synt_F1_beta_N"/>
    <property type="match status" value="1"/>
</dbReference>
<dbReference type="CDD" id="cd01133">
    <property type="entry name" value="F1-ATPase_beta_CD"/>
    <property type="match status" value="1"/>
</dbReference>
<dbReference type="FunFam" id="1.10.1140.10:FF:000001">
    <property type="entry name" value="ATP synthase subunit beta"/>
    <property type="match status" value="1"/>
</dbReference>
<dbReference type="FunFam" id="2.40.10.170:FF:000005">
    <property type="entry name" value="ATP synthase subunit beta"/>
    <property type="match status" value="1"/>
</dbReference>
<dbReference type="FunFam" id="3.40.50.300:FF:000026">
    <property type="entry name" value="ATP synthase subunit beta"/>
    <property type="match status" value="1"/>
</dbReference>
<dbReference type="Gene3D" id="2.40.10.170">
    <property type="match status" value="1"/>
</dbReference>
<dbReference type="Gene3D" id="1.10.1140.10">
    <property type="entry name" value="Bovine Mitochondrial F1-atpase, Atp Synthase Beta Chain, Chain D, domain 3"/>
    <property type="match status" value="1"/>
</dbReference>
<dbReference type="Gene3D" id="3.40.50.300">
    <property type="entry name" value="P-loop containing nucleotide triphosphate hydrolases"/>
    <property type="match status" value="1"/>
</dbReference>
<dbReference type="HAMAP" id="MF_01347">
    <property type="entry name" value="ATP_synth_beta_bact"/>
    <property type="match status" value="1"/>
</dbReference>
<dbReference type="InterPro" id="IPR003593">
    <property type="entry name" value="AAA+_ATPase"/>
</dbReference>
<dbReference type="InterPro" id="IPR055190">
    <property type="entry name" value="ATP-synt_VA_C"/>
</dbReference>
<dbReference type="InterPro" id="IPR005722">
    <property type="entry name" value="ATP_synth_F1_bsu"/>
</dbReference>
<dbReference type="InterPro" id="IPR020003">
    <property type="entry name" value="ATPase_a/bsu_AS"/>
</dbReference>
<dbReference type="InterPro" id="IPR050053">
    <property type="entry name" value="ATPase_alpha/beta_chains"/>
</dbReference>
<dbReference type="InterPro" id="IPR004100">
    <property type="entry name" value="ATPase_F1/V1/A1_a/bsu_N"/>
</dbReference>
<dbReference type="InterPro" id="IPR036121">
    <property type="entry name" value="ATPase_F1/V1/A1_a/bsu_N_sf"/>
</dbReference>
<dbReference type="InterPro" id="IPR000194">
    <property type="entry name" value="ATPase_F1/V1/A1_a/bsu_nucl-bd"/>
</dbReference>
<dbReference type="InterPro" id="IPR024034">
    <property type="entry name" value="ATPase_F1/V1_b/a_C"/>
</dbReference>
<dbReference type="InterPro" id="IPR027417">
    <property type="entry name" value="P-loop_NTPase"/>
</dbReference>
<dbReference type="NCBIfam" id="TIGR01039">
    <property type="entry name" value="atpD"/>
    <property type="match status" value="1"/>
</dbReference>
<dbReference type="PANTHER" id="PTHR15184">
    <property type="entry name" value="ATP SYNTHASE"/>
    <property type="match status" value="1"/>
</dbReference>
<dbReference type="PANTHER" id="PTHR15184:SF71">
    <property type="entry name" value="ATP SYNTHASE SUBUNIT BETA, MITOCHONDRIAL"/>
    <property type="match status" value="1"/>
</dbReference>
<dbReference type="Pfam" id="PF00006">
    <property type="entry name" value="ATP-synt_ab"/>
    <property type="match status" value="1"/>
</dbReference>
<dbReference type="Pfam" id="PF02874">
    <property type="entry name" value="ATP-synt_ab_N"/>
    <property type="match status" value="1"/>
</dbReference>
<dbReference type="Pfam" id="PF22919">
    <property type="entry name" value="ATP-synt_VA_C"/>
    <property type="match status" value="1"/>
</dbReference>
<dbReference type="SMART" id="SM00382">
    <property type="entry name" value="AAA"/>
    <property type="match status" value="1"/>
</dbReference>
<dbReference type="SUPFAM" id="SSF47917">
    <property type="entry name" value="C-terminal domain of alpha and beta subunits of F1 ATP synthase"/>
    <property type="match status" value="1"/>
</dbReference>
<dbReference type="SUPFAM" id="SSF50615">
    <property type="entry name" value="N-terminal domain of alpha and beta subunits of F1 ATP synthase"/>
    <property type="match status" value="1"/>
</dbReference>
<dbReference type="SUPFAM" id="SSF52540">
    <property type="entry name" value="P-loop containing nucleoside triphosphate hydrolases"/>
    <property type="match status" value="1"/>
</dbReference>
<dbReference type="PROSITE" id="PS00152">
    <property type="entry name" value="ATPASE_ALPHA_BETA"/>
    <property type="match status" value="1"/>
</dbReference>
<proteinExistence type="inferred from homology"/>